<proteinExistence type="inferred from homology"/>
<name>CH60_AYWBP</name>
<dbReference type="EC" id="5.6.1.7" evidence="1"/>
<dbReference type="EMBL" id="CP000061">
    <property type="protein sequence ID" value="ABC65717.1"/>
    <property type="molecule type" value="Genomic_DNA"/>
</dbReference>
<dbReference type="RefSeq" id="WP_011412879.1">
    <property type="nucleotide sequence ID" value="NC_007716.1"/>
</dbReference>
<dbReference type="SMR" id="Q2NIM6"/>
<dbReference type="STRING" id="322098.AYWB_600"/>
<dbReference type="KEGG" id="ayw:AYWB_600"/>
<dbReference type="eggNOG" id="COG0459">
    <property type="taxonomic scope" value="Bacteria"/>
</dbReference>
<dbReference type="HOGENOM" id="CLU_016503_3_0_14"/>
<dbReference type="OrthoDB" id="9766614at2"/>
<dbReference type="PhylomeDB" id="Q2NIM6"/>
<dbReference type="Proteomes" id="UP000001934">
    <property type="component" value="Chromosome"/>
</dbReference>
<dbReference type="GO" id="GO:0005737">
    <property type="term" value="C:cytoplasm"/>
    <property type="evidence" value="ECO:0007669"/>
    <property type="project" value="UniProtKB-SubCell"/>
</dbReference>
<dbReference type="GO" id="GO:0005524">
    <property type="term" value="F:ATP binding"/>
    <property type="evidence" value="ECO:0007669"/>
    <property type="project" value="UniProtKB-UniRule"/>
</dbReference>
<dbReference type="GO" id="GO:0140662">
    <property type="term" value="F:ATP-dependent protein folding chaperone"/>
    <property type="evidence" value="ECO:0007669"/>
    <property type="project" value="InterPro"/>
</dbReference>
<dbReference type="GO" id="GO:0016853">
    <property type="term" value="F:isomerase activity"/>
    <property type="evidence" value="ECO:0007669"/>
    <property type="project" value="UniProtKB-KW"/>
</dbReference>
<dbReference type="GO" id="GO:0051082">
    <property type="term" value="F:unfolded protein binding"/>
    <property type="evidence" value="ECO:0007669"/>
    <property type="project" value="UniProtKB-UniRule"/>
</dbReference>
<dbReference type="GO" id="GO:0042026">
    <property type="term" value="P:protein refolding"/>
    <property type="evidence" value="ECO:0007669"/>
    <property type="project" value="UniProtKB-UniRule"/>
</dbReference>
<dbReference type="CDD" id="cd03344">
    <property type="entry name" value="GroEL"/>
    <property type="match status" value="1"/>
</dbReference>
<dbReference type="FunFam" id="3.50.7.10:FF:000001">
    <property type="entry name" value="60 kDa chaperonin"/>
    <property type="match status" value="1"/>
</dbReference>
<dbReference type="Gene3D" id="3.50.7.10">
    <property type="entry name" value="GroEL"/>
    <property type="match status" value="1"/>
</dbReference>
<dbReference type="Gene3D" id="1.10.560.10">
    <property type="entry name" value="GroEL-like equatorial domain"/>
    <property type="match status" value="1"/>
</dbReference>
<dbReference type="Gene3D" id="3.30.260.10">
    <property type="entry name" value="TCP-1-like chaperonin intermediate domain"/>
    <property type="match status" value="1"/>
</dbReference>
<dbReference type="HAMAP" id="MF_00600">
    <property type="entry name" value="CH60"/>
    <property type="match status" value="1"/>
</dbReference>
<dbReference type="InterPro" id="IPR001844">
    <property type="entry name" value="Cpn60/GroEL"/>
</dbReference>
<dbReference type="InterPro" id="IPR002423">
    <property type="entry name" value="Cpn60/GroEL/TCP-1"/>
</dbReference>
<dbReference type="InterPro" id="IPR027409">
    <property type="entry name" value="GroEL-like_apical_dom_sf"/>
</dbReference>
<dbReference type="InterPro" id="IPR027413">
    <property type="entry name" value="GROEL-like_equatorial_sf"/>
</dbReference>
<dbReference type="InterPro" id="IPR027410">
    <property type="entry name" value="TCP-1-like_intermed_sf"/>
</dbReference>
<dbReference type="NCBIfam" id="TIGR02348">
    <property type="entry name" value="GroEL"/>
    <property type="match status" value="1"/>
</dbReference>
<dbReference type="NCBIfam" id="NF000592">
    <property type="entry name" value="PRK00013.1"/>
    <property type="match status" value="1"/>
</dbReference>
<dbReference type="NCBIfam" id="NF009487">
    <property type="entry name" value="PRK12849.1"/>
    <property type="match status" value="1"/>
</dbReference>
<dbReference type="NCBIfam" id="NF009488">
    <property type="entry name" value="PRK12850.1"/>
    <property type="match status" value="1"/>
</dbReference>
<dbReference type="NCBIfam" id="NF009489">
    <property type="entry name" value="PRK12851.1"/>
    <property type="match status" value="1"/>
</dbReference>
<dbReference type="PANTHER" id="PTHR45633">
    <property type="entry name" value="60 KDA HEAT SHOCK PROTEIN, MITOCHONDRIAL"/>
    <property type="match status" value="1"/>
</dbReference>
<dbReference type="Pfam" id="PF00118">
    <property type="entry name" value="Cpn60_TCP1"/>
    <property type="match status" value="1"/>
</dbReference>
<dbReference type="PRINTS" id="PR00298">
    <property type="entry name" value="CHAPERONIN60"/>
</dbReference>
<dbReference type="SUPFAM" id="SSF52029">
    <property type="entry name" value="GroEL apical domain-like"/>
    <property type="match status" value="1"/>
</dbReference>
<dbReference type="SUPFAM" id="SSF48592">
    <property type="entry name" value="GroEL equatorial domain-like"/>
    <property type="match status" value="1"/>
</dbReference>
<dbReference type="SUPFAM" id="SSF54849">
    <property type="entry name" value="GroEL-intermediate domain like"/>
    <property type="match status" value="1"/>
</dbReference>
<accession>Q2NIM6</accession>
<sequence length="536" mass="57978">MSKKILYGKEARKALLQGVDAIANTVKVTLGPKGRNVILEKAYESPAIVNDGVSIAKEIELKNPYQNMGAKLVYEVASKTNDKAGDGTTTATVLAQSMIHRGFDAIDAGANPVLVKEGIELASLTVAKKLLAKSKKVDDQEDIQNVASVSSGSQEIGKIIAQAMQKVGKDGVINVDESKGFETELEVVEGLQYDKGYASPYFVSDRESMTVHLENALVLVTDHKISTVQEIVPILEEVVKASRPLLIVAEAVENEVLGVLVANKLRGTFNVVVTNAPGFGDNQKEMLKDIAVLTKANFVFKDLNMKLADLKMDDLGNINKVIIKKDNTTLISNSKSPELEKRIQLLKTQIKNSTSDYETKNLQERLAKLSGGVALIKVGAATDTELKDKKLRIEDALNATKAAITEGIVVGGGKALVEVYQELKDTLVSDNKEVQQGIDLVVQSLLVPTYQIAYNAGFSGKDVVKQQLLQPSNFGFNAKEGKYVCLLKEGIIDPTKVTRQAVINAASISALMITTEAAVVSFKENKDNNFDLGTQE</sequence>
<comment type="function">
    <text evidence="1">Together with its co-chaperonin GroES, plays an essential role in assisting protein folding. The GroEL-GroES system forms a nano-cage that allows encapsulation of the non-native substrate proteins and provides a physical environment optimized to promote and accelerate protein folding.</text>
</comment>
<comment type="catalytic activity">
    <reaction evidence="1">
        <text>ATP + H2O + a folded polypeptide = ADP + phosphate + an unfolded polypeptide.</text>
        <dbReference type="EC" id="5.6.1.7"/>
    </reaction>
</comment>
<comment type="subunit">
    <text evidence="1">Forms a cylinder of 14 subunits composed of two heptameric rings stacked back-to-back. Interacts with the co-chaperonin GroES.</text>
</comment>
<comment type="subcellular location">
    <subcellularLocation>
        <location evidence="1">Cytoplasm</location>
    </subcellularLocation>
</comment>
<comment type="similarity">
    <text evidence="1">Belongs to the chaperonin (HSP60) family.</text>
</comment>
<gene>
    <name evidence="1" type="primary">groEL</name>
    <name evidence="1" type="synonym">groL</name>
    <name type="ordered locus">AYWB_600</name>
</gene>
<evidence type="ECO:0000255" key="1">
    <source>
        <dbReference type="HAMAP-Rule" id="MF_00600"/>
    </source>
</evidence>
<protein>
    <recommendedName>
        <fullName evidence="1">Chaperonin GroEL</fullName>
        <ecNumber evidence="1">5.6.1.7</ecNumber>
    </recommendedName>
    <alternativeName>
        <fullName evidence="1">60 kDa chaperonin</fullName>
    </alternativeName>
    <alternativeName>
        <fullName evidence="1">Chaperonin-60</fullName>
        <shortName evidence="1">Cpn60</shortName>
    </alternativeName>
</protein>
<reference key="1">
    <citation type="journal article" date="2006" name="J. Bacteriol.">
        <title>Living with genome instability: the adaptation of phytoplasmas to diverse environments of their insect and plant hosts.</title>
        <authorList>
            <person name="Bai X."/>
            <person name="Zhang J."/>
            <person name="Ewing A."/>
            <person name="Miller S.A."/>
            <person name="Jancso Radek A."/>
            <person name="Shevchenko D.V."/>
            <person name="Tsukerman K."/>
            <person name="Walunas T."/>
            <person name="Lapidus A."/>
            <person name="Campbell J.W."/>
            <person name="Hogenhout S.A."/>
        </authorList>
    </citation>
    <scope>NUCLEOTIDE SEQUENCE [LARGE SCALE GENOMIC DNA]</scope>
    <source>
        <strain>AYWB</strain>
    </source>
</reference>
<feature type="chain" id="PRO_0000256873" description="Chaperonin GroEL">
    <location>
        <begin position="1"/>
        <end position="536"/>
    </location>
</feature>
<feature type="binding site" evidence="1">
    <location>
        <begin position="29"/>
        <end position="32"/>
    </location>
    <ligand>
        <name>ATP</name>
        <dbReference type="ChEBI" id="CHEBI:30616"/>
    </ligand>
</feature>
<feature type="binding site" evidence="1">
    <location>
        <begin position="86"/>
        <end position="90"/>
    </location>
    <ligand>
        <name>ATP</name>
        <dbReference type="ChEBI" id="CHEBI:30616"/>
    </ligand>
</feature>
<feature type="binding site" evidence="1">
    <location>
        <position position="412"/>
    </location>
    <ligand>
        <name>ATP</name>
        <dbReference type="ChEBI" id="CHEBI:30616"/>
    </ligand>
</feature>
<feature type="binding site" evidence="1">
    <location>
        <position position="493"/>
    </location>
    <ligand>
        <name>ATP</name>
        <dbReference type="ChEBI" id="CHEBI:30616"/>
    </ligand>
</feature>
<keyword id="KW-0067">ATP-binding</keyword>
<keyword id="KW-0143">Chaperone</keyword>
<keyword id="KW-0963">Cytoplasm</keyword>
<keyword id="KW-0413">Isomerase</keyword>
<keyword id="KW-0547">Nucleotide-binding</keyword>
<organism>
    <name type="scientific">Aster yellows witches'-broom phytoplasma (strain AYWB)</name>
    <dbReference type="NCBI Taxonomy" id="322098"/>
    <lineage>
        <taxon>Bacteria</taxon>
        <taxon>Bacillati</taxon>
        <taxon>Mycoplasmatota</taxon>
        <taxon>Mollicutes</taxon>
        <taxon>Acholeplasmatales</taxon>
        <taxon>Acholeplasmataceae</taxon>
        <taxon>Candidatus Phytoplasma</taxon>
        <taxon>16SrI (Aster yellows group)</taxon>
    </lineage>
</organism>